<evidence type="ECO:0000250" key="1">
    <source>
        <dbReference type="UniProtKB" id="P16519"/>
    </source>
</evidence>
<evidence type="ECO:0000250" key="2">
    <source>
        <dbReference type="UniProtKB" id="P23188"/>
    </source>
</evidence>
<evidence type="ECO:0000255" key="3"/>
<evidence type="ECO:0000255" key="4">
    <source>
        <dbReference type="PROSITE-ProRule" id="PRU01173"/>
    </source>
</evidence>
<evidence type="ECO:0000255" key="5">
    <source>
        <dbReference type="PROSITE-ProRule" id="PRU01240"/>
    </source>
</evidence>
<evidence type="ECO:0000305" key="6"/>
<evidence type="ECO:0007744" key="7">
    <source>
    </source>
</evidence>
<dbReference type="EC" id="3.4.21.94"/>
<dbReference type="EMBL" id="M76706">
    <property type="protein sequence ID" value="AAA40946.1"/>
    <property type="molecule type" value="mRNA"/>
</dbReference>
<dbReference type="EMBL" id="M83746">
    <property type="protein sequence ID" value="AAA41477.1"/>
    <property type="molecule type" value="mRNA"/>
</dbReference>
<dbReference type="PIR" id="B41556">
    <property type="entry name" value="KXRTC2"/>
</dbReference>
<dbReference type="RefSeq" id="NP_036878.1">
    <property type="nucleotide sequence ID" value="NM_012746.2"/>
</dbReference>
<dbReference type="SMR" id="P28841"/>
<dbReference type="BioGRID" id="247192">
    <property type="interactions" value="2"/>
</dbReference>
<dbReference type="FunCoup" id="P28841">
    <property type="interactions" value="1225"/>
</dbReference>
<dbReference type="IntAct" id="P28841">
    <property type="interactions" value="3"/>
</dbReference>
<dbReference type="STRING" id="10116.ENSRNOP00000007249"/>
<dbReference type="MEROPS" id="S08.073"/>
<dbReference type="GlyCosmos" id="P28841">
    <property type="glycosylation" value="3 sites, 5 glycans"/>
</dbReference>
<dbReference type="GlyGen" id="P28841">
    <property type="glycosylation" value="3 sites, 5 N-linked glycans (1 site)"/>
</dbReference>
<dbReference type="iPTMnet" id="P28841"/>
<dbReference type="PhosphoSitePlus" id="P28841"/>
<dbReference type="PaxDb" id="10116-ENSRNOP00000007249"/>
<dbReference type="Ensembl" id="ENSRNOT00000007249.5">
    <property type="protein sequence ID" value="ENSRNOP00000007249.3"/>
    <property type="gene ID" value="ENSRNOG00000005438.6"/>
</dbReference>
<dbReference type="GeneID" id="25121"/>
<dbReference type="KEGG" id="rno:25121"/>
<dbReference type="UCSC" id="RGD:3273">
    <property type="organism name" value="rat"/>
</dbReference>
<dbReference type="AGR" id="RGD:3273"/>
<dbReference type="CTD" id="5126"/>
<dbReference type="RGD" id="3273">
    <property type="gene designation" value="Pcsk2"/>
</dbReference>
<dbReference type="eggNOG" id="KOG3526">
    <property type="taxonomic scope" value="Eukaryota"/>
</dbReference>
<dbReference type="GeneTree" id="ENSGT00940000156965"/>
<dbReference type="HOGENOM" id="CLU_002976_4_4_1"/>
<dbReference type="InParanoid" id="P28841"/>
<dbReference type="OMA" id="LAKQWHS"/>
<dbReference type="OrthoDB" id="300641at2759"/>
<dbReference type="PhylomeDB" id="P28841"/>
<dbReference type="TreeFam" id="TF314277"/>
<dbReference type="BRENDA" id="3.4.21.94">
    <property type="organism ID" value="5301"/>
</dbReference>
<dbReference type="PRO" id="PR:P28841"/>
<dbReference type="Proteomes" id="UP000002494">
    <property type="component" value="Chromosome 3"/>
</dbReference>
<dbReference type="Bgee" id="ENSRNOG00000005438">
    <property type="expression patterns" value="Expressed in frontal cortex and 8 other cell types or tissues"/>
</dbReference>
<dbReference type="GO" id="GO:0030425">
    <property type="term" value="C:dendrite"/>
    <property type="evidence" value="ECO:0000314"/>
    <property type="project" value="RGD"/>
</dbReference>
<dbReference type="GO" id="GO:0005615">
    <property type="term" value="C:extracellular space"/>
    <property type="evidence" value="ECO:0000250"/>
    <property type="project" value="UniProtKB"/>
</dbReference>
<dbReference type="GO" id="GO:0016020">
    <property type="term" value="C:membrane"/>
    <property type="evidence" value="ECO:0000266"/>
    <property type="project" value="RGD"/>
</dbReference>
<dbReference type="GO" id="GO:0043005">
    <property type="term" value="C:neuron projection"/>
    <property type="evidence" value="ECO:0000318"/>
    <property type="project" value="GO_Central"/>
</dbReference>
<dbReference type="GO" id="GO:0043025">
    <property type="term" value="C:neuronal cell body"/>
    <property type="evidence" value="ECO:0000314"/>
    <property type="project" value="RGD"/>
</dbReference>
<dbReference type="GO" id="GO:0043204">
    <property type="term" value="C:perikaryon"/>
    <property type="evidence" value="ECO:0000314"/>
    <property type="project" value="RGD"/>
</dbReference>
<dbReference type="GO" id="GO:0030141">
    <property type="term" value="C:secretory granule"/>
    <property type="evidence" value="ECO:0000314"/>
    <property type="project" value="RGD"/>
</dbReference>
<dbReference type="GO" id="GO:0034774">
    <property type="term" value="C:secretory granule lumen"/>
    <property type="evidence" value="ECO:0000304"/>
    <property type="project" value="Reactome"/>
</dbReference>
<dbReference type="GO" id="GO:0030133">
    <property type="term" value="C:transport vesicle"/>
    <property type="evidence" value="ECO:0007669"/>
    <property type="project" value="UniProtKB-SubCell"/>
</dbReference>
<dbReference type="GO" id="GO:0004175">
    <property type="term" value="F:endopeptidase activity"/>
    <property type="evidence" value="ECO:0000266"/>
    <property type="project" value="RGD"/>
</dbReference>
<dbReference type="GO" id="GO:0004252">
    <property type="term" value="F:serine-type endopeptidase activity"/>
    <property type="evidence" value="ECO:0000315"/>
    <property type="project" value="BHF-UCL"/>
</dbReference>
<dbReference type="GO" id="GO:0034230">
    <property type="term" value="P:enkephalin processing"/>
    <property type="evidence" value="ECO:0000266"/>
    <property type="project" value="RGD"/>
</dbReference>
<dbReference type="GO" id="GO:0030070">
    <property type="term" value="P:insulin processing"/>
    <property type="evidence" value="ECO:0000266"/>
    <property type="project" value="RGD"/>
</dbReference>
<dbReference type="GO" id="GO:0034231">
    <property type="term" value="P:islet amyloid polypeptide processing"/>
    <property type="evidence" value="ECO:0000315"/>
    <property type="project" value="BHF-UCL"/>
</dbReference>
<dbReference type="GO" id="GO:0007399">
    <property type="term" value="P:nervous system development"/>
    <property type="evidence" value="ECO:0000266"/>
    <property type="project" value="RGD"/>
</dbReference>
<dbReference type="GO" id="GO:0016486">
    <property type="term" value="P:peptide hormone processing"/>
    <property type="evidence" value="ECO:0000315"/>
    <property type="project" value="RGD"/>
</dbReference>
<dbReference type="GO" id="GO:0016540">
    <property type="term" value="P:protein autoprocessing"/>
    <property type="evidence" value="ECO:0000266"/>
    <property type="project" value="RGD"/>
</dbReference>
<dbReference type="GO" id="GO:0016485">
    <property type="term" value="P:protein processing"/>
    <property type="evidence" value="ECO:0000315"/>
    <property type="project" value="RGD"/>
</dbReference>
<dbReference type="GO" id="GO:0006508">
    <property type="term" value="P:proteolysis"/>
    <property type="evidence" value="ECO:0000266"/>
    <property type="project" value="RGD"/>
</dbReference>
<dbReference type="CDD" id="cd04059">
    <property type="entry name" value="Peptidases_S8_Protein_convertases_Kexins_Furin-like"/>
    <property type="match status" value="1"/>
</dbReference>
<dbReference type="FunFam" id="2.60.120.260:FF:000020">
    <property type="entry name" value="neuroendocrine convertase 2"/>
    <property type="match status" value="1"/>
</dbReference>
<dbReference type="FunFam" id="3.30.70.850:FF:000003">
    <property type="entry name" value="neuroendocrine convertase 2 isoform X1"/>
    <property type="match status" value="1"/>
</dbReference>
<dbReference type="FunFam" id="3.40.50.200:FF:000004">
    <property type="entry name" value="Proprotein convertase type 2"/>
    <property type="match status" value="1"/>
</dbReference>
<dbReference type="Gene3D" id="2.60.120.260">
    <property type="entry name" value="Galactose-binding domain-like"/>
    <property type="match status" value="1"/>
</dbReference>
<dbReference type="Gene3D" id="3.30.70.850">
    <property type="entry name" value="Peptidase S8, pro-domain"/>
    <property type="match status" value="1"/>
</dbReference>
<dbReference type="Gene3D" id="3.40.50.200">
    <property type="entry name" value="Peptidase S8/S53 domain"/>
    <property type="match status" value="1"/>
</dbReference>
<dbReference type="InterPro" id="IPR008979">
    <property type="entry name" value="Galactose-bd-like_sf"/>
</dbReference>
<dbReference type="InterPro" id="IPR034182">
    <property type="entry name" value="Kexin/furin"/>
</dbReference>
<dbReference type="InterPro" id="IPR002884">
    <property type="entry name" value="P_dom"/>
</dbReference>
<dbReference type="InterPro" id="IPR000209">
    <property type="entry name" value="Peptidase_S8/S53_dom"/>
</dbReference>
<dbReference type="InterPro" id="IPR036852">
    <property type="entry name" value="Peptidase_S8/S53_dom_sf"/>
</dbReference>
<dbReference type="InterPro" id="IPR023827">
    <property type="entry name" value="Peptidase_S8_Asp-AS"/>
</dbReference>
<dbReference type="InterPro" id="IPR022398">
    <property type="entry name" value="Peptidase_S8_His-AS"/>
</dbReference>
<dbReference type="InterPro" id="IPR023828">
    <property type="entry name" value="Peptidase_S8_Ser-AS"/>
</dbReference>
<dbReference type="InterPro" id="IPR015500">
    <property type="entry name" value="Peptidase_S8_subtilisin-rel"/>
</dbReference>
<dbReference type="InterPro" id="IPR032815">
    <property type="entry name" value="S8_pro-domain"/>
</dbReference>
<dbReference type="InterPro" id="IPR038466">
    <property type="entry name" value="S8_pro-domain_sf"/>
</dbReference>
<dbReference type="PANTHER" id="PTHR42884:SF13">
    <property type="entry name" value="NEUROENDOCRINE CONVERTASE 2"/>
    <property type="match status" value="1"/>
</dbReference>
<dbReference type="PANTHER" id="PTHR42884">
    <property type="entry name" value="PROPROTEIN CONVERTASE SUBTILISIN/KEXIN-RELATED"/>
    <property type="match status" value="1"/>
</dbReference>
<dbReference type="Pfam" id="PF01483">
    <property type="entry name" value="P_proprotein"/>
    <property type="match status" value="1"/>
</dbReference>
<dbReference type="Pfam" id="PF00082">
    <property type="entry name" value="Peptidase_S8"/>
    <property type="match status" value="1"/>
</dbReference>
<dbReference type="Pfam" id="PF16470">
    <property type="entry name" value="S8_pro-domain"/>
    <property type="match status" value="1"/>
</dbReference>
<dbReference type="PRINTS" id="PR00723">
    <property type="entry name" value="SUBTILISIN"/>
</dbReference>
<dbReference type="SUPFAM" id="SSF49785">
    <property type="entry name" value="Galactose-binding domain-like"/>
    <property type="match status" value="1"/>
</dbReference>
<dbReference type="SUPFAM" id="SSF54897">
    <property type="entry name" value="Protease propeptides/inhibitors"/>
    <property type="match status" value="1"/>
</dbReference>
<dbReference type="SUPFAM" id="SSF52743">
    <property type="entry name" value="Subtilisin-like"/>
    <property type="match status" value="1"/>
</dbReference>
<dbReference type="PROSITE" id="PS51829">
    <property type="entry name" value="P_HOMO_B"/>
    <property type="match status" value="1"/>
</dbReference>
<dbReference type="PROSITE" id="PS51892">
    <property type="entry name" value="SUBTILASE"/>
    <property type="match status" value="1"/>
</dbReference>
<dbReference type="PROSITE" id="PS00136">
    <property type="entry name" value="SUBTILASE_ASP"/>
    <property type="match status" value="1"/>
</dbReference>
<dbReference type="PROSITE" id="PS00137">
    <property type="entry name" value="SUBTILASE_HIS"/>
    <property type="match status" value="1"/>
</dbReference>
<dbReference type="PROSITE" id="PS00138">
    <property type="entry name" value="SUBTILASE_SER"/>
    <property type="match status" value="1"/>
</dbReference>
<gene>
    <name type="primary">Pcsk2</name>
    <name type="synonym">Nec-2</name>
    <name type="synonym">Nec2</name>
    <name type="synonym">Rpc2</name>
</gene>
<accession>P28841</accession>
<reference key="1">
    <citation type="journal article" date="1991" name="Mol. Endocrinol.">
        <title>Prohormone-converting enzymes: regulation and evaluation of function using antisense RNA.</title>
        <authorList>
            <person name="Bloomquist B.T."/>
            <person name="Eipper B.A."/>
            <person name="Mains R.E."/>
        </authorList>
    </citation>
    <scope>NUCLEOTIDE SEQUENCE [MRNA]</scope>
</reference>
<reference key="2">
    <citation type="journal article" date="1991" name="Endocrinology">
        <title>Isolation of two complementary deoxyribonucleic acid clones from a rat insulinoma cell line based on similarities to Kex2 and furin sequences and the specific localization of each transcript to endocrine and neuroendocrine tissues in rats.</title>
        <authorList>
            <person name="Hakes D.J."/>
            <person name="Birch N.P."/>
            <person name="Mezey A."/>
            <person name="Dixon J.E."/>
        </authorList>
    </citation>
    <scope>NUCLEOTIDE SEQUENCE [MRNA]</scope>
</reference>
<reference key="3">
    <citation type="journal article" date="2013" name="J. Proteome Res.">
        <title>Site-specific glycan-peptide analysis for determination of N-glycoproteome heterogeneity.</title>
        <authorList>
            <person name="Parker B.L."/>
            <person name="Thaysen-Andersen M."/>
            <person name="Solis N."/>
            <person name="Scott N.E."/>
            <person name="Larsen M.R."/>
            <person name="Graham M.E."/>
            <person name="Packer N.H."/>
            <person name="Cordwell S.J."/>
        </authorList>
    </citation>
    <scope>GLYCOSYLATION [LARGE SCALE ANALYSIS] AT ASN-523</scope>
    <scope>IDENTIFICATION BY MASS SPECTROMETRY [LARGE SCALE ANALYSIS]</scope>
    <source>
        <tissue>Brain</tissue>
    </source>
</reference>
<comment type="function">
    <text evidence="1">Serine endopeptidase which is involved in the processing of hormone and other protein precursors at sites comprised of pairs of basic amino acid residues. Responsible for the release of glucagon from proglucagon in pancreatic A cells (By similarity).</text>
</comment>
<comment type="catalytic activity">
    <reaction>
        <text>Release of protein hormones and neuropeptides from their precursors, generally by hydrolysis of -Lys-Arg-|- bonds.</text>
        <dbReference type="EC" id="3.4.21.94"/>
    </reaction>
</comment>
<comment type="interaction">
    <interactant intactId="EBI-988244">
        <id>P28841</id>
    </interactant>
    <interactant intactId="EBI-988232">
        <id>P27682</id>
        <label>Scg5</label>
    </interactant>
    <organismsDiffer>false</organismsDiffer>
    <experiments>4</experiments>
</comment>
<comment type="subcellular location">
    <subcellularLocation>
        <location evidence="1">Cytoplasmic vesicle</location>
        <location evidence="1">Secretory vesicle</location>
    </subcellularLocation>
    <subcellularLocation>
        <location evidence="1">Secreted</location>
    </subcellularLocation>
    <text evidence="1">Localized in the secretion granules.</text>
</comment>
<comment type="similarity">
    <text evidence="6">Belongs to the peptidase S8 family. Furin subfamily.</text>
</comment>
<keyword id="KW-0165">Cleavage on pair of basic residues</keyword>
<keyword id="KW-0968">Cytoplasmic vesicle</keyword>
<keyword id="KW-1015">Disulfide bond</keyword>
<keyword id="KW-0325">Glycoprotein</keyword>
<keyword id="KW-0378">Hydrolase</keyword>
<keyword id="KW-0645">Protease</keyword>
<keyword id="KW-1185">Reference proteome</keyword>
<keyword id="KW-0964">Secreted</keyword>
<keyword id="KW-0720">Serine protease</keyword>
<keyword id="KW-0732">Signal</keyword>
<keyword id="KW-0865">Zymogen</keyword>
<protein>
    <recommendedName>
        <fullName>Neuroendocrine convertase 2</fullName>
        <shortName>NEC 2</shortName>
        <ecNumber>3.4.21.94</ecNumber>
    </recommendedName>
    <alternativeName>
        <fullName>KEX2-like endoprotease 2</fullName>
    </alternativeName>
    <alternativeName>
        <fullName>Prohormone convertase 2</fullName>
    </alternativeName>
    <alternativeName>
        <fullName>Proprotein convertase 2</fullName>
        <shortName>PC2</shortName>
    </alternativeName>
</protein>
<name>NEC2_RAT</name>
<sequence length="637" mass="70753">MEGGCGSQWKAAGLLFCVMVFASAERPVFTNHFLVELHKDGEEEARQVAAEHGFGVRKLPFAEGLYHFYHNGLAKAKRRRSLHHKRQLERDPRIKMALQQEGFDRKKRGYRDINEIDINMNDPLFTKQWYLFNTGQADGTPGLDLNVAEAWELGYTGKGVTIGIMDDGIDYLHPDLAYNYNSDASYDFSSNDPYPYPRYTDDWFNSHGTRCAGEVSAAASNNICGVGVAYNSKVAGIRMLDQPFMTDIIEASSISHMPQLIDIYSASWGPTDNGKTVDGPRELTLQAMADGVNKGRGGKGSIYVWASGDGGSYDDCNCDGYASSMWTISINSAINDGRTALYDESCSSTLASTFSNGRKRNPEAGVATTDLYGNCTLRHSGTSAAAPEAAGVFALALEANVDLTWRDMQHLTVLTSKRNQLHDEVHQWRRNGVGLEFNHLFGYGVLDAGAMVKMAKDWKTVPERFHCVGGSVQNPEKIPPTGKLVLTLQTNACEGKENFVRYLEHVQAVITVNATRRGDLNINMTSPMGTKSILLSRRPRDDDSKVGFDKWPFMTTHTWGEDARGTWTLELGFVGSAPQKGLLKEWTLMLHGTQSAPYIDQVVRDYQSKLAMSKKQELEEELDEAVERSLQSILRKN</sequence>
<feature type="signal peptide" evidence="3">
    <location>
        <begin position="1"/>
        <end position="24"/>
    </location>
</feature>
<feature type="propeptide" id="PRO_0000027071" evidence="3">
    <location>
        <begin position="25"/>
        <end position="108"/>
    </location>
</feature>
<feature type="chain" id="PRO_0000027072" description="Neuroendocrine convertase 2">
    <location>
        <begin position="109"/>
        <end position="637"/>
    </location>
</feature>
<feature type="domain" description="Peptidase S8" evidence="5">
    <location>
        <begin position="128"/>
        <end position="452"/>
    </location>
</feature>
<feature type="domain" description="P/Homo B" evidence="4">
    <location>
        <begin position="460"/>
        <end position="596"/>
    </location>
</feature>
<feature type="active site" description="Charge relay system" evidence="5">
    <location>
        <position position="166"/>
    </location>
</feature>
<feature type="active site" description="Charge relay system" evidence="5">
    <location>
        <position position="207"/>
    </location>
</feature>
<feature type="active site" description="Charge relay system" evidence="5">
    <location>
        <position position="383"/>
    </location>
</feature>
<feature type="glycosylation site" description="N-linked (GlcNAc...) asparagine" evidence="3">
    <location>
        <position position="374"/>
    </location>
</feature>
<feature type="glycosylation site" description="N-linked (GlcNAc...) asparagine" evidence="3">
    <location>
        <position position="513"/>
    </location>
</feature>
<feature type="glycosylation site" description="N-linked (GlcNAc...) asparagine" evidence="7">
    <location>
        <position position="523"/>
    </location>
</feature>
<feature type="disulfide bond" evidence="2">
    <location>
        <begin position="224"/>
        <end position="375"/>
    </location>
</feature>
<feature type="disulfide bond" evidence="2">
    <location>
        <begin position="316"/>
        <end position="346"/>
    </location>
</feature>
<feature type="disulfide bond" evidence="2">
    <location>
        <begin position="467"/>
        <end position="493"/>
    </location>
</feature>
<feature type="sequence conflict" description="In Ref. 2; AAA41477." evidence="6" ref="2">
    <original>G</original>
    <variation>GI</variation>
    <location>
        <position position="320"/>
    </location>
</feature>
<feature type="sequence conflict" description="In Ref. 2; AAA41477." evidence="6" ref="2">
    <original>Y</original>
    <variation>H</variation>
    <location>
        <position position="342"/>
    </location>
</feature>
<organism>
    <name type="scientific">Rattus norvegicus</name>
    <name type="common">Rat</name>
    <dbReference type="NCBI Taxonomy" id="10116"/>
    <lineage>
        <taxon>Eukaryota</taxon>
        <taxon>Metazoa</taxon>
        <taxon>Chordata</taxon>
        <taxon>Craniata</taxon>
        <taxon>Vertebrata</taxon>
        <taxon>Euteleostomi</taxon>
        <taxon>Mammalia</taxon>
        <taxon>Eutheria</taxon>
        <taxon>Euarchontoglires</taxon>
        <taxon>Glires</taxon>
        <taxon>Rodentia</taxon>
        <taxon>Myomorpha</taxon>
        <taxon>Muroidea</taxon>
        <taxon>Muridae</taxon>
        <taxon>Murinae</taxon>
        <taxon>Rattus</taxon>
    </lineage>
</organism>
<proteinExistence type="evidence at protein level"/>